<evidence type="ECO:0000255" key="1">
    <source>
        <dbReference type="HAMAP-Rule" id="MF_00531"/>
    </source>
</evidence>
<evidence type="ECO:0000305" key="2"/>
<dbReference type="EMBL" id="CP001033">
    <property type="protein sequence ID" value="ACB89474.1"/>
    <property type="molecule type" value="Genomic_DNA"/>
</dbReference>
<dbReference type="RefSeq" id="WP_000533766.1">
    <property type="nucleotide sequence ID" value="NC_010582.1"/>
</dbReference>
<dbReference type="SMR" id="B2IS44"/>
<dbReference type="GeneID" id="93920908"/>
<dbReference type="KEGG" id="spw:SPCG_0222"/>
<dbReference type="HOGENOM" id="CLU_144911_0_1_9"/>
<dbReference type="GO" id="GO:0005737">
    <property type="term" value="C:cytoplasm"/>
    <property type="evidence" value="ECO:0007669"/>
    <property type="project" value="UniProtKB-ARBA"/>
</dbReference>
<dbReference type="GO" id="GO:0015935">
    <property type="term" value="C:small ribosomal subunit"/>
    <property type="evidence" value="ECO:0007669"/>
    <property type="project" value="InterPro"/>
</dbReference>
<dbReference type="GO" id="GO:0019843">
    <property type="term" value="F:rRNA binding"/>
    <property type="evidence" value="ECO:0007669"/>
    <property type="project" value="UniProtKB-UniRule"/>
</dbReference>
<dbReference type="GO" id="GO:0003735">
    <property type="term" value="F:structural constituent of ribosome"/>
    <property type="evidence" value="ECO:0007669"/>
    <property type="project" value="InterPro"/>
</dbReference>
<dbReference type="GO" id="GO:0000028">
    <property type="term" value="P:ribosomal small subunit assembly"/>
    <property type="evidence" value="ECO:0007669"/>
    <property type="project" value="TreeGrafter"/>
</dbReference>
<dbReference type="GO" id="GO:0006412">
    <property type="term" value="P:translation"/>
    <property type="evidence" value="ECO:0007669"/>
    <property type="project" value="UniProtKB-UniRule"/>
</dbReference>
<dbReference type="FunFam" id="3.30.860.10:FF:000001">
    <property type="entry name" value="30S ribosomal protein S19"/>
    <property type="match status" value="1"/>
</dbReference>
<dbReference type="Gene3D" id="3.30.860.10">
    <property type="entry name" value="30s Ribosomal Protein S19, Chain A"/>
    <property type="match status" value="1"/>
</dbReference>
<dbReference type="HAMAP" id="MF_00531">
    <property type="entry name" value="Ribosomal_uS19"/>
    <property type="match status" value="1"/>
</dbReference>
<dbReference type="InterPro" id="IPR002222">
    <property type="entry name" value="Ribosomal_uS19"/>
</dbReference>
<dbReference type="InterPro" id="IPR005732">
    <property type="entry name" value="Ribosomal_uS19_bac-type"/>
</dbReference>
<dbReference type="InterPro" id="IPR020934">
    <property type="entry name" value="Ribosomal_uS19_CS"/>
</dbReference>
<dbReference type="InterPro" id="IPR023575">
    <property type="entry name" value="Ribosomal_uS19_SF"/>
</dbReference>
<dbReference type="NCBIfam" id="TIGR01050">
    <property type="entry name" value="rpsS_bact"/>
    <property type="match status" value="1"/>
</dbReference>
<dbReference type="PANTHER" id="PTHR11880">
    <property type="entry name" value="RIBOSOMAL PROTEIN S19P FAMILY MEMBER"/>
    <property type="match status" value="1"/>
</dbReference>
<dbReference type="PANTHER" id="PTHR11880:SF8">
    <property type="entry name" value="SMALL RIBOSOMAL SUBUNIT PROTEIN US19M"/>
    <property type="match status" value="1"/>
</dbReference>
<dbReference type="Pfam" id="PF00203">
    <property type="entry name" value="Ribosomal_S19"/>
    <property type="match status" value="1"/>
</dbReference>
<dbReference type="PIRSF" id="PIRSF002144">
    <property type="entry name" value="Ribosomal_S19"/>
    <property type="match status" value="1"/>
</dbReference>
<dbReference type="PRINTS" id="PR00975">
    <property type="entry name" value="RIBOSOMALS19"/>
</dbReference>
<dbReference type="SUPFAM" id="SSF54570">
    <property type="entry name" value="Ribosomal protein S19"/>
    <property type="match status" value="1"/>
</dbReference>
<dbReference type="PROSITE" id="PS00323">
    <property type="entry name" value="RIBOSOMAL_S19"/>
    <property type="match status" value="1"/>
</dbReference>
<proteinExistence type="inferred from homology"/>
<gene>
    <name evidence="1" type="primary">rpsS</name>
    <name type="ordered locus">SPCG_0222</name>
</gene>
<accession>B2IS44</accession>
<keyword id="KW-0687">Ribonucleoprotein</keyword>
<keyword id="KW-0689">Ribosomal protein</keyword>
<keyword id="KW-0694">RNA-binding</keyword>
<keyword id="KW-0699">rRNA-binding</keyword>
<comment type="function">
    <text evidence="1">Protein S19 forms a complex with S13 that binds strongly to the 16S ribosomal RNA.</text>
</comment>
<comment type="similarity">
    <text evidence="1">Belongs to the universal ribosomal protein uS19 family.</text>
</comment>
<protein>
    <recommendedName>
        <fullName evidence="1">Small ribosomal subunit protein uS19</fullName>
    </recommendedName>
    <alternativeName>
        <fullName evidence="2">30S ribosomal protein S19</fullName>
    </alternativeName>
</protein>
<feature type="chain" id="PRO_1000128044" description="Small ribosomal subunit protein uS19">
    <location>
        <begin position="1"/>
        <end position="93"/>
    </location>
</feature>
<reference key="1">
    <citation type="journal article" date="2009" name="BMC Genomics">
        <title>Genome evolution driven by host adaptations results in a more virulent and antimicrobial-resistant Streptococcus pneumoniae serotype 14.</title>
        <authorList>
            <person name="Ding F."/>
            <person name="Tang P."/>
            <person name="Hsu M.-H."/>
            <person name="Cui P."/>
            <person name="Hu S."/>
            <person name="Yu J."/>
            <person name="Chiu C.-H."/>
        </authorList>
    </citation>
    <scope>NUCLEOTIDE SEQUENCE [LARGE SCALE GENOMIC DNA]</scope>
    <source>
        <strain>CGSP14</strain>
    </source>
</reference>
<organism>
    <name type="scientific">Streptococcus pneumoniae (strain CGSP14)</name>
    <dbReference type="NCBI Taxonomy" id="516950"/>
    <lineage>
        <taxon>Bacteria</taxon>
        <taxon>Bacillati</taxon>
        <taxon>Bacillota</taxon>
        <taxon>Bacilli</taxon>
        <taxon>Lactobacillales</taxon>
        <taxon>Streptococcaceae</taxon>
        <taxon>Streptococcus</taxon>
    </lineage>
</organism>
<sequence>MGRSLKKGPFVDEHLMKKVEAQANDEKKKVIKTWSRRSTIFPSFIGYTIAVYDGRKHVPVYIQEDMVGHKLGEFAPTRTYKGHAADDKKTRRK</sequence>
<name>RS19_STRPS</name>